<name>TPM_CHIKI</name>
<feature type="chain" id="PRO_0000205683" description="Tropomyosin">
    <location>
        <begin position="1"/>
        <end position="285"/>
    </location>
</feature>
<feature type="coiled-coil region" evidence="3">
    <location>
        <begin position="1"/>
        <end position="273"/>
    </location>
</feature>
<reference key="1">
    <citation type="journal article" date="2004" name="Clin. Diagn. Lab. Immunol.">
        <title>Molecular cloning and characterization of tropomyosin, a major allergen of Chironomus kiiensis, a dominant species of nonbiting midges in Korea.</title>
        <authorList>
            <person name="Jeong K.Y."/>
            <person name="Yum H.Y."/>
            <person name="Lee I.Y."/>
            <person name="Ree H.I."/>
            <person name="Hong C.S."/>
            <person name="Kim D.S."/>
            <person name="Yong T.S."/>
        </authorList>
    </citation>
    <scope>NUCLEOTIDE SEQUENCE [MRNA]</scope>
    <scope>ALLERGEN</scope>
</reference>
<dbReference type="EMBL" id="AJ012184">
    <property type="protein sequence ID" value="CAA09938.2"/>
    <property type="molecule type" value="mRNA"/>
</dbReference>
<dbReference type="SMR" id="O96764"/>
<dbReference type="Allergome" id="200">
    <property type="allergen name" value="Chi k 10"/>
</dbReference>
<dbReference type="Allergome" id="3191">
    <property type="allergen name" value="Chi k 10.0101"/>
</dbReference>
<dbReference type="GO" id="GO:0042803">
    <property type="term" value="F:protein homodimerization activity"/>
    <property type="evidence" value="ECO:0000250"/>
    <property type="project" value="UniProtKB"/>
</dbReference>
<dbReference type="GO" id="GO:0006937">
    <property type="term" value="P:regulation of muscle contraction"/>
    <property type="evidence" value="ECO:0000250"/>
    <property type="project" value="UniProtKB"/>
</dbReference>
<dbReference type="FunFam" id="1.20.5.170:FF:000005">
    <property type="entry name" value="Tropomyosin alpha-1 chain"/>
    <property type="match status" value="1"/>
</dbReference>
<dbReference type="FunFam" id="1.20.5.170:FF:000001">
    <property type="entry name" value="Tropomyosin alpha-1 chain isoform 1"/>
    <property type="match status" value="1"/>
</dbReference>
<dbReference type="FunFam" id="1.20.5.340:FF:000001">
    <property type="entry name" value="Tropomyosin alpha-1 chain isoform 2"/>
    <property type="match status" value="1"/>
</dbReference>
<dbReference type="Gene3D" id="1.20.5.170">
    <property type="match status" value="2"/>
</dbReference>
<dbReference type="Gene3D" id="1.20.5.340">
    <property type="match status" value="1"/>
</dbReference>
<dbReference type="InterPro" id="IPR000533">
    <property type="entry name" value="Tropomyosin"/>
</dbReference>
<dbReference type="PANTHER" id="PTHR19269">
    <property type="entry name" value="TROPOMYOSIN"/>
    <property type="match status" value="1"/>
</dbReference>
<dbReference type="Pfam" id="PF00261">
    <property type="entry name" value="Tropomyosin"/>
    <property type="match status" value="2"/>
</dbReference>
<dbReference type="PRINTS" id="PR00194">
    <property type="entry name" value="TROPOMYOSIN"/>
</dbReference>
<dbReference type="SUPFAM" id="SSF57997">
    <property type="entry name" value="Tropomyosin"/>
    <property type="match status" value="1"/>
</dbReference>
<dbReference type="PROSITE" id="PS00326">
    <property type="entry name" value="TROPOMYOSIN"/>
    <property type="match status" value="1"/>
</dbReference>
<protein>
    <recommendedName>
        <fullName evidence="5">Tropomyosin</fullName>
    </recommendedName>
    <alternativeName>
        <fullName evidence="5">Allergen Chi k 10</fullName>
    </alternativeName>
    <allergenName evidence="6">Chi k 10.0101</allergenName>
</protein>
<evidence type="ECO:0000250" key="1">
    <source>
        <dbReference type="UniProtKB" id="A2V735"/>
    </source>
</evidence>
<evidence type="ECO:0000250" key="2">
    <source>
        <dbReference type="UniProtKB" id="Q22866"/>
    </source>
</evidence>
<evidence type="ECO:0000255" key="3"/>
<evidence type="ECO:0000269" key="4">
    <source>
    </source>
</evidence>
<evidence type="ECO:0000303" key="5">
    <source>
    </source>
</evidence>
<evidence type="ECO:0000305" key="6"/>
<accession>O96764</accession>
<proteinExistence type="evidence at protein level"/>
<comment type="function">
    <text evidence="2">Tropomyosin, in association with the troponin complex, plays a central role in the calcium dependent regulation of muscle contraction.</text>
</comment>
<comment type="subunit">
    <text evidence="1">Homodimer.</text>
</comment>
<comment type="domain">
    <text evidence="6">The molecule is in a coiled coil structure that is formed by 2 polypeptide chains. The sequence exhibits a prominent seven-residues periodicity.</text>
</comment>
<comment type="allergen">
    <text evidence="4">Causes an allergic reaction in human. Binds to IgE in 81% of the 21 patients tested allergic to adult non-biting midge C.kiiensis.</text>
</comment>
<comment type="similarity">
    <text evidence="6">Belongs to the tropomyosin family.</text>
</comment>
<keyword id="KW-0020">Allergen</keyword>
<keyword id="KW-0175">Coiled coil</keyword>
<keyword id="KW-0514">Muscle protein</keyword>
<keyword id="KW-0677">Repeat</keyword>
<organism>
    <name type="scientific">Chironomus kiiensis</name>
    <name type="common">Midge</name>
    <dbReference type="NCBI Taxonomy" id="84408"/>
    <lineage>
        <taxon>Eukaryota</taxon>
        <taxon>Metazoa</taxon>
        <taxon>Ecdysozoa</taxon>
        <taxon>Arthropoda</taxon>
        <taxon>Hexapoda</taxon>
        <taxon>Insecta</taxon>
        <taxon>Pterygota</taxon>
        <taxon>Neoptera</taxon>
        <taxon>Endopterygota</taxon>
        <taxon>Diptera</taxon>
        <taxon>Nematocera</taxon>
        <taxon>Chironomoidea</taxon>
        <taxon>Chironomidae</taxon>
        <taxon>Chironominae</taxon>
        <taxon>Chironomus</taxon>
    </lineage>
</organism>
<sequence>MDAIKKKMQAMKLEKDNALDRALLCENQARDANLRAEKAEEEARTLQKKIQTIENDLDQTQGQETLVNGKLEGKEKALQNAESEVAALNRRIQLLGEDLDRSEERLASATAKLSEASAAADESERARKILENRSLADEERMDALENQLKEARFLAEEADKKYDEVARKLAMVEADLERAEERAEAGEAKIVELEEELRVVGNNLKSLEVSEEKANQREEEYKNQIKTLTTRLKEAEARAEFAERSVQKLQKEVDRLEDELVSEKEKYREIGDDLDTAFVELILKE</sequence>